<protein>
    <recommendedName>
        <fullName evidence="7">ATP synthase protein 8</fullName>
    </recommendedName>
    <alternativeName>
        <fullName evidence="1">A6L</fullName>
    </alternativeName>
    <alternativeName>
        <fullName evidence="1">F-ATPase subunit 8</fullName>
    </alternativeName>
</protein>
<organism evidence="7">
    <name type="scientific">Pichia angusta</name>
    <name type="common">Yeast</name>
    <name type="synonym">Hansenula polymorpha</name>
    <dbReference type="NCBI Taxonomy" id="870730"/>
    <lineage>
        <taxon>Eukaryota</taxon>
        <taxon>Fungi</taxon>
        <taxon>Dikarya</taxon>
        <taxon>Ascomycota</taxon>
        <taxon>Saccharomycotina</taxon>
        <taxon>Pichiomycetes</taxon>
        <taxon>Pichiales</taxon>
        <taxon>Pichiaceae</taxon>
        <taxon>Ogataea</taxon>
    </lineage>
</organism>
<proteinExistence type="evidence at protein level"/>
<dbReference type="SMR" id="C0HK68"/>
<dbReference type="GO" id="GO:0005743">
    <property type="term" value="C:mitochondrial inner membrane"/>
    <property type="evidence" value="ECO:0007669"/>
    <property type="project" value="UniProtKB-SubCell"/>
</dbReference>
<dbReference type="GO" id="GO:0045259">
    <property type="term" value="C:proton-transporting ATP synthase complex"/>
    <property type="evidence" value="ECO:0007669"/>
    <property type="project" value="UniProtKB-KW"/>
</dbReference>
<dbReference type="GO" id="GO:0015078">
    <property type="term" value="F:proton transmembrane transporter activity"/>
    <property type="evidence" value="ECO:0007669"/>
    <property type="project" value="InterPro"/>
</dbReference>
<dbReference type="GO" id="GO:0015986">
    <property type="term" value="P:proton motive force-driven ATP synthesis"/>
    <property type="evidence" value="ECO:0007669"/>
    <property type="project" value="InterPro"/>
</dbReference>
<dbReference type="InterPro" id="IPR009230">
    <property type="entry name" value="ATP_synth_su8_fun"/>
</dbReference>
<dbReference type="Pfam" id="PF05933">
    <property type="entry name" value="Fun_ATP-synt_8"/>
    <property type="match status" value="1"/>
</dbReference>
<sequence>MPQLIPFFFLNQLFYGYLALFALLVLVSWVILPYLLQLQIVRLLITKL</sequence>
<evidence type="ECO:0000250" key="1">
    <source>
        <dbReference type="UniProtKB" id="P00856"/>
    </source>
</evidence>
<evidence type="ECO:0000250" key="2">
    <source>
        <dbReference type="UniProtKB" id="Q36257"/>
    </source>
</evidence>
<evidence type="ECO:0000255" key="3"/>
<evidence type="ECO:0000269" key="4">
    <source>
    </source>
</evidence>
<evidence type="ECO:0000269" key="5">
    <source>
    </source>
</evidence>
<evidence type="ECO:0000269" key="6">
    <source ref="1"/>
</evidence>
<evidence type="ECO:0000303" key="7">
    <source>
    </source>
</evidence>
<evidence type="ECO:0000303" key="8">
    <source ref="1"/>
</evidence>
<evidence type="ECO:0000305" key="9"/>
<evidence type="ECO:0000305" key="10">
    <source>
    </source>
</evidence>
<gene>
    <name evidence="1" type="primary">ATP8</name>
</gene>
<feature type="chain" id="PRO_0000445333" description="ATP synthase protein 8" evidence="6">
    <location>
        <begin position="1"/>
        <end position="48"/>
    </location>
</feature>
<feature type="topological domain" description="Mitochondrial intermembrane" evidence="10">
    <location>
        <begin position="1"/>
        <end position="12"/>
    </location>
</feature>
<feature type="transmembrane region" description="Helical" evidence="3">
    <location>
        <begin position="13"/>
        <end position="33"/>
    </location>
</feature>
<feature type="topological domain" description="Mitochondrial matrix" evidence="10">
    <location>
        <begin position="34"/>
        <end position="48"/>
    </location>
</feature>
<feature type="modified residue" description="N-formylmethionine" evidence="6">
    <location>
        <position position="1"/>
    </location>
</feature>
<name>ATP8_PICAN</name>
<accession>C0HK68</accession>
<reference evidence="9" key="1">
    <citation type="submission" date="2016-08" db="UniProtKB">
        <authorList>
            <person name="Fearnley I.M."/>
        </authorList>
    </citation>
    <scope>PARTIAL PROTEIN SEQUENCE</scope>
    <source>
        <strain evidence="8">A16 / NCYC 2310</strain>
    </source>
</reference>
<reference evidence="9" key="2">
    <citation type="journal article" date="2015" name="Biochem. J.">
        <title>The purification and characterization of ATP synthase complexes from the mitochondria of four fungal species.</title>
        <authorList>
            <person name="Liu S."/>
            <person name="Charlesworth T.J."/>
            <person name="Bason J.V."/>
            <person name="Montgomery M.G."/>
            <person name="Harbour M.E."/>
            <person name="Fearnley I.M."/>
            <person name="Walker J.E."/>
        </authorList>
    </citation>
    <scope>IDENTIFICATION IN ATP SYNTHASE COMPLEX</scope>
    <scope>FUNCTION OF ATPASE COMPLEX</scope>
    <scope>SUBUNIT</scope>
    <scope>SUBCELLULAR LOCATION</scope>
    <scope>MASS SPECTROMETRY</scope>
    <scope>IDENTIFICATION BY MASS SPECTROMETRY</scope>
    <scope>FORMYLATION AT MET-1</scope>
    <source>
        <strain evidence="7">A16 / NCYC 2310</strain>
    </source>
</reference>
<reference evidence="9" key="3">
    <citation type="journal article" date="2016" name="Proc. Natl. Acad. Sci. U.S.A.">
        <title>Structure of the mitochondrial ATP synthase from Pichia angusta determined by electron cryo-microscopy.</title>
        <authorList>
            <person name="Vinothkumar K.R."/>
            <person name="Montgomery M.G."/>
            <person name="Liu S."/>
            <person name="Walker J.E."/>
        </authorList>
    </citation>
    <scope>STRUCTURE BY ELECTRON MICROSCOPY (7.0 ANGSTROMS) OF MONOMERIC ATP SYNTHASE COMPLEX IN COMPLEX WITH BOVINE ATPIF1</scope>
    <scope>FUNCTION</scope>
    <scope>SUBUNIT</scope>
    <scope>SUBCELLULAR LOCATION</scope>
</reference>
<comment type="function">
    <text evidence="2 4 5">Mitochondrial membrane ATP synthase (F(1)F(0) ATP synthase or Complex V) produces ATP from ADP in the presence of a proton gradient across the membrane which is generated by electron transport complexes of the respiratory chain (PubMed:25759169). F-type ATP synthases consist of two structural domains, F(1) - containing the extramembraneous catalytic core, and F(0) - containing the membrane proton channel, linked together by a central stalk and a peripheral stalk (PubMed:27791192). During catalysis, ATP synthesis in the catalytic domain of F(1) is coupled via a rotary mechanism of the central stalk subunits to proton translocation (By similarity). Part of the complex F(0) domain (PubMed:27791192). Minor subunit located with subunit a/ATP6 in the membrane (PubMed:27791192).</text>
</comment>
<comment type="subunit">
    <text evidence="2 4 5">F-type ATP synthases have 2 components, the catalytic core F(1) and the membrane-embedded component F(0), linked together by a central stalk and a peripheral stalk (PubMed:27791192). The central stalk, also called rotor shaft, is often seen as part of F(1) (PubMed:27791192). The peripheral stalk is seen as part of F(0). F(0) contains the membrane channel next to the rotor (PubMed:27791192). F-type ATP synthases form dimers but each monomer functions independently in ATP generation (By similarity). The dimer consists of 18 different polypeptides: ATP1 (subunit alpha, part of F(1), 3 molecules per monomer), ATP2 (subunit beta, part of F(1), 3 molecules per monomer), ATP3 (subunit gamma, part of the central stalk), ATP4 (subunit b, part of the peripheral stalk), ATP5/OSCP (subunit 5/OSCP, part of the peripheral stalk), ATP6 (subunit a, part of the peripheral stalk), ATP7 (subunit d, part of the peripheral stalk), ATP8 (subunit 8, part of the peripheral stalk), OLI1 (subunit c, part of the rotor, 10 molecules per monomer), ATP14 (subunit h, part of the peripheral stalk), ATP15 (subunit epsilon, part of the central stalk), ATP16 (subunit delta, part of the central stalk), ATP17 (subunit f, part of the peripheral stalk), ATP18 (subunit i/j, part of the peripheral stalk) (PubMed:25759169, PubMed:27791192). Dimer-specific subunits are ATP19 (subunit k, at interface between monomers), ATP20 (subunit g, at interface between monomers), TIM11 (subunit e, at interface between monomers) (By similarity). Also contains subunit L (PubMed:25759169).</text>
</comment>
<comment type="subcellular location">
    <subcellularLocation>
        <location evidence="10">Mitochondrion inner membrane</location>
        <topology evidence="3">Single-pass membrane protein</topology>
    </subcellularLocation>
    <text evidence="10">The F-type ATP synthase complex is anchored in the mitochondrial inner membrane via the F(0) domain with the F(1) domain and the peripheral stalk extending into the mitochondrial matrix.</text>
</comment>
<comment type="mass spectrometry"/>
<comment type="similarity">
    <text evidence="9">Belongs to the ATPase protein 8 family.</text>
</comment>
<keyword id="KW-0066">ATP synthesis</keyword>
<keyword id="KW-0138">CF(0)</keyword>
<keyword id="KW-0903">Direct protein sequencing</keyword>
<keyword id="KW-0291">Formylation</keyword>
<keyword id="KW-0375">Hydrogen ion transport</keyword>
<keyword id="KW-0406">Ion transport</keyword>
<keyword id="KW-0472">Membrane</keyword>
<keyword id="KW-0496">Mitochondrion</keyword>
<keyword id="KW-0999">Mitochondrion inner membrane</keyword>
<keyword id="KW-0812">Transmembrane</keyword>
<keyword id="KW-1133">Transmembrane helix</keyword>
<keyword id="KW-0813">Transport</keyword>